<evidence type="ECO:0000255" key="1">
    <source>
        <dbReference type="HAMAP-Rule" id="MF_03133"/>
    </source>
</evidence>
<evidence type="ECO:0000269" key="2">
    <source>
    </source>
</evidence>
<evidence type="ECO:0000305" key="3"/>
<proteinExistence type="evidence at protein level"/>
<organism>
    <name type="scientific">Candida albicans (strain SC5314 / ATCC MYA-2876)</name>
    <name type="common">Yeast</name>
    <dbReference type="NCBI Taxonomy" id="237561"/>
    <lineage>
        <taxon>Eukaryota</taxon>
        <taxon>Fungi</taxon>
        <taxon>Dikarya</taxon>
        <taxon>Ascomycota</taxon>
        <taxon>Saccharomycotina</taxon>
        <taxon>Pichiomycetes</taxon>
        <taxon>Debaryomycetaceae</taxon>
        <taxon>Candida/Lodderomyces clade</taxon>
        <taxon>Candida</taxon>
    </lineage>
</organism>
<comment type="function">
    <text evidence="1 2">Catalyzes the attachment of alanine to tRNA(Ala) in a two-step reaction: alanine is first activated by ATP to form Ala-AMP and then transferred to the acceptor end of tRNA(Ala). Also edits incorrectly charged tRNA(Ala) via its editing domain.</text>
</comment>
<comment type="catalytic activity">
    <reaction evidence="1">
        <text>tRNA(Ala) + L-alanine + ATP = L-alanyl-tRNA(Ala) + AMP + diphosphate</text>
        <dbReference type="Rhea" id="RHEA:12540"/>
        <dbReference type="Rhea" id="RHEA-COMP:9657"/>
        <dbReference type="Rhea" id="RHEA-COMP:9923"/>
        <dbReference type="ChEBI" id="CHEBI:30616"/>
        <dbReference type="ChEBI" id="CHEBI:33019"/>
        <dbReference type="ChEBI" id="CHEBI:57972"/>
        <dbReference type="ChEBI" id="CHEBI:78442"/>
        <dbReference type="ChEBI" id="CHEBI:78497"/>
        <dbReference type="ChEBI" id="CHEBI:456215"/>
        <dbReference type="EC" id="6.1.1.7"/>
    </reaction>
</comment>
<comment type="cofactor">
    <cofactor evidence="1">
        <name>Zn(2+)</name>
        <dbReference type="ChEBI" id="CHEBI:29105"/>
    </cofactor>
    <text evidence="1">Binds 1 zinc ion per subunit.</text>
</comment>
<comment type="subunit">
    <text evidence="1">Monomer.</text>
</comment>
<comment type="subcellular location">
    <subcellularLocation>
        <location evidence="1 2">Mitochondrion</location>
    </subcellularLocation>
    <subcellularLocation>
        <location evidence="1 2">Cytoplasm</location>
    </subcellularLocation>
</comment>
<comment type="alternative products">
    <event type="alternative initiation"/>
    <isoform>
        <id>Q5A8K2-1</id>
        <name>Mitochondrial</name>
        <sequence type="displayed"/>
    </isoform>
    <isoform>
        <id>Q5A8K2-2</id>
        <name>Cytoplasmic</name>
        <sequence type="described" ref="VSP_040237"/>
    </isoform>
</comment>
<comment type="domain">
    <text evidence="1">Consists of three domains; the N-terminal catalytic domain, the editing domain and the C-terminal C-Ala domain. The editing domain removes incorrectly charged amino acids, while the C-Ala domain, along with tRNA(Ala), serves as a bridge to cooperatively bring together the editing and aminoacylation centers thus stimulating deacylation of misacylated tRNAs.</text>
</comment>
<comment type="similarity">
    <text evidence="1">Belongs to the class-II aminoacyl-tRNA synthetase family.</text>
</comment>
<protein>
    <recommendedName>
        <fullName evidence="1">Alanine--tRNA ligase</fullName>
        <ecNumber evidence="1">6.1.1.7</ecNumber>
    </recommendedName>
    <alternativeName>
        <fullName evidence="1">Alanyl-tRNA synthetase</fullName>
        <shortName evidence="1">AlaRS</shortName>
    </alternativeName>
</protein>
<dbReference type="EC" id="6.1.1.7" evidence="1"/>
<dbReference type="EMBL" id="CP017628">
    <property type="protein sequence ID" value="AOW30299.1"/>
    <property type="molecule type" value="Genomic_DNA"/>
</dbReference>
<dbReference type="RefSeq" id="XP_718082.1">
    <molecule id="Q5A8K2-1"/>
    <property type="nucleotide sequence ID" value="XM_712989.2"/>
</dbReference>
<dbReference type="SMR" id="Q5A8K2"/>
<dbReference type="FunCoup" id="Q5A8K2">
    <property type="interactions" value="1042"/>
</dbReference>
<dbReference type="STRING" id="237561.Q5A8K2"/>
<dbReference type="EnsemblFungi" id="C6_03720W_A-T">
    <molecule id="Q5A8K2-1"/>
    <property type="protein sequence ID" value="C6_03720W_A-T-p1"/>
    <property type="gene ID" value="C6_03720W_A"/>
</dbReference>
<dbReference type="GeneID" id="3640285"/>
<dbReference type="KEGG" id="cal:CAALFM_C603720WA"/>
<dbReference type="CGD" id="CAL0000182169">
    <property type="gene designation" value="ALA1"/>
</dbReference>
<dbReference type="VEuPathDB" id="FungiDB:C6_03720W_A"/>
<dbReference type="eggNOG" id="KOG0188">
    <property type="taxonomic scope" value="Eukaryota"/>
</dbReference>
<dbReference type="HOGENOM" id="CLU_004485_5_0_1"/>
<dbReference type="InParanoid" id="Q5A8K2"/>
<dbReference type="OMA" id="NKKDNFW"/>
<dbReference type="OrthoDB" id="2423964at2759"/>
<dbReference type="PRO" id="PR:Q5A8K2"/>
<dbReference type="Proteomes" id="UP000000559">
    <property type="component" value="Chromosome 6"/>
</dbReference>
<dbReference type="GO" id="GO:0005737">
    <property type="term" value="C:cytoplasm"/>
    <property type="evidence" value="ECO:0000316"/>
    <property type="project" value="CGD"/>
</dbReference>
<dbReference type="GO" id="GO:0005739">
    <property type="term" value="C:mitochondrion"/>
    <property type="evidence" value="ECO:0000316"/>
    <property type="project" value="CGD"/>
</dbReference>
<dbReference type="GO" id="GO:0004813">
    <property type="term" value="F:alanine-tRNA ligase activity"/>
    <property type="evidence" value="ECO:0000316"/>
    <property type="project" value="CGD"/>
</dbReference>
<dbReference type="GO" id="GO:0002161">
    <property type="term" value="F:aminoacyl-tRNA deacylase activity"/>
    <property type="evidence" value="ECO:0000318"/>
    <property type="project" value="GO_Central"/>
</dbReference>
<dbReference type="GO" id="GO:0005524">
    <property type="term" value="F:ATP binding"/>
    <property type="evidence" value="ECO:0007669"/>
    <property type="project" value="UniProtKB-UniRule"/>
</dbReference>
<dbReference type="GO" id="GO:0000049">
    <property type="term" value="F:tRNA binding"/>
    <property type="evidence" value="ECO:0007669"/>
    <property type="project" value="UniProtKB-KW"/>
</dbReference>
<dbReference type="GO" id="GO:0008270">
    <property type="term" value="F:zinc ion binding"/>
    <property type="evidence" value="ECO:0007669"/>
    <property type="project" value="UniProtKB-UniRule"/>
</dbReference>
<dbReference type="GO" id="GO:0006419">
    <property type="term" value="P:alanyl-tRNA aminoacylation"/>
    <property type="evidence" value="ECO:0000316"/>
    <property type="project" value="CGD"/>
</dbReference>
<dbReference type="GO" id="GO:0070143">
    <property type="term" value="P:mitochondrial alanyl-tRNA aminoacylation"/>
    <property type="evidence" value="ECO:0007669"/>
    <property type="project" value="UniProtKB-UniRule"/>
</dbReference>
<dbReference type="CDD" id="cd00673">
    <property type="entry name" value="AlaRS_core"/>
    <property type="match status" value="1"/>
</dbReference>
<dbReference type="FunFam" id="2.40.30.130:FF:000004">
    <property type="entry name" value="Alanine--tRNA ligase"/>
    <property type="match status" value="1"/>
</dbReference>
<dbReference type="FunFam" id="3.10.310.40:FF:000003">
    <property type="entry name" value="Alanine--tRNA ligase"/>
    <property type="match status" value="1"/>
</dbReference>
<dbReference type="FunFam" id="3.30.930.10:FF:000011">
    <property type="entry name" value="Alanine--tRNA ligase, cytoplasmic"/>
    <property type="match status" value="1"/>
</dbReference>
<dbReference type="FunFam" id="3.30.980.10:FF:000004">
    <property type="entry name" value="Alanine--tRNA ligase, cytoplasmic"/>
    <property type="match status" value="1"/>
</dbReference>
<dbReference type="Gene3D" id="2.40.30.130">
    <property type="match status" value="1"/>
</dbReference>
<dbReference type="Gene3D" id="3.10.310.40">
    <property type="match status" value="1"/>
</dbReference>
<dbReference type="Gene3D" id="3.30.930.10">
    <property type="entry name" value="Bira Bifunctional Protein, Domain 2"/>
    <property type="match status" value="1"/>
</dbReference>
<dbReference type="Gene3D" id="3.30.980.10">
    <property type="entry name" value="Threonyl-trna Synthetase, Chain A, domain 2"/>
    <property type="match status" value="1"/>
</dbReference>
<dbReference type="HAMAP" id="MF_00036_B">
    <property type="entry name" value="Ala_tRNA_synth_B"/>
    <property type="match status" value="1"/>
</dbReference>
<dbReference type="InterPro" id="IPR045864">
    <property type="entry name" value="aa-tRNA-synth_II/BPL/LPL"/>
</dbReference>
<dbReference type="InterPro" id="IPR002318">
    <property type="entry name" value="Ala-tRNA-lgiase_IIc"/>
</dbReference>
<dbReference type="InterPro" id="IPR018162">
    <property type="entry name" value="Ala-tRNA-ligase_IIc_anticod-bd"/>
</dbReference>
<dbReference type="InterPro" id="IPR018165">
    <property type="entry name" value="Ala-tRNA-synth_IIc_core"/>
</dbReference>
<dbReference type="InterPro" id="IPR018164">
    <property type="entry name" value="Ala-tRNA-synth_IIc_N"/>
</dbReference>
<dbReference type="InterPro" id="IPR050058">
    <property type="entry name" value="Ala-tRNA_ligase"/>
</dbReference>
<dbReference type="InterPro" id="IPR023033">
    <property type="entry name" value="Ala_tRNA_ligase_euk/bac"/>
</dbReference>
<dbReference type="InterPro" id="IPR003156">
    <property type="entry name" value="DHHA1_dom"/>
</dbReference>
<dbReference type="InterPro" id="IPR018163">
    <property type="entry name" value="Thr/Ala-tRNA-synth_IIc_edit"/>
</dbReference>
<dbReference type="InterPro" id="IPR009000">
    <property type="entry name" value="Transl_B-barrel_sf"/>
</dbReference>
<dbReference type="InterPro" id="IPR012947">
    <property type="entry name" value="tRNA_SAD"/>
</dbReference>
<dbReference type="NCBIfam" id="TIGR00344">
    <property type="entry name" value="alaS"/>
    <property type="match status" value="1"/>
</dbReference>
<dbReference type="PANTHER" id="PTHR11777:SF9">
    <property type="entry name" value="ALANINE--TRNA LIGASE, CYTOPLASMIC"/>
    <property type="match status" value="1"/>
</dbReference>
<dbReference type="PANTHER" id="PTHR11777">
    <property type="entry name" value="ALANYL-TRNA SYNTHETASE"/>
    <property type="match status" value="1"/>
</dbReference>
<dbReference type="Pfam" id="PF02272">
    <property type="entry name" value="DHHA1"/>
    <property type="match status" value="1"/>
</dbReference>
<dbReference type="Pfam" id="PF01411">
    <property type="entry name" value="tRNA-synt_2c"/>
    <property type="match status" value="1"/>
</dbReference>
<dbReference type="Pfam" id="PF07973">
    <property type="entry name" value="tRNA_SAD"/>
    <property type="match status" value="1"/>
</dbReference>
<dbReference type="PRINTS" id="PR00980">
    <property type="entry name" value="TRNASYNTHALA"/>
</dbReference>
<dbReference type="SMART" id="SM00863">
    <property type="entry name" value="tRNA_SAD"/>
    <property type="match status" value="1"/>
</dbReference>
<dbReference type="SUPFAM" id="SSF55681">
    <property type="entry name" value="Class II aaRS and biotin synthetases"/>
    <property type="match status" value="1"/>
</dbReference>
<dbReference type="SUPFAM" id="SSF101353">
    <property type="entry name" value="Putative anticodon-binding domain of alanyl-tRNA synthetase (AlaRS)"/>
    <property type="match status" value="1"/>
</dbReference>
<dbReference type="SUPFAM" id="SSF55186">
    <property type="entry name" value="ThrRS/AlaRS common domain"/>
    <property type="match status" value="1"/>
</dbReference>
<dbReference type="SUPFAM" id="SSF50447">
    <property type="entry name" value="Translation proteins"/>
    <property type="match status" value="1"/>
</dbReference>
<dbReference type="PROSITE" id="PS50860">
    <property type="entry name" value="AA_TRNA_LIGASE_II_ALA"/>
    <property type="match status" value="1"/>
</dbReference>
<reference key="1">
    <citation type="journal article" date="2004" name="Proc. Natl. Acad. Sci. U.S.A.">
        <title>The diploid genome sequence of Candida albicans.</title>
        <authorList>
            <person name="Jones T."/>
            <person name="Federspiel N.A."/>
            <person name="Chibana H."/>
            <person name="Dungan J."/>
            <person name="Kalman S."/>
            <person name="Magee B.B."/>
            <person name="Newport G."/>
            <person name="Thorstenson Y.R."/>
            <person name="Agabian N."/>
            <person name="Magee P.T."/>
            <person name="Davis R.W."/>
            <person name="Scherer S."/>
        </authorList>
    </citation>
    <scope>NUCLEOTIDE SEQUENCE [LARGE SCALE GENOMIC DNA]</scope>
    <source>
        <strain>SC5314 / ATCC MYA-2876</strain>
    </source>
</reference>
<reference key="2">
    <citation type="journal article" date="2007" name="Genome Biol.">
        <title>Assembly of the Candida albicans genome into sixteen supercontigs aligned on the eight chromosomes.</title>
        <authorList>
            <person name="van het Hoog M."/>
            <person name="Rast T.J."/>
            <person name="Martchenko M."/>
            <person name="Grindle S."/>
            <person name="Dignard D."/>
            <person name="Hogues H."/>
            <person name="Cuomo C."/>
            <person name="Berriman M."/>
            <person name="Scherer S."/>
            <person name="Magee B.B."/>
            <person name="Whiteway M."/>
            <person name="Chibana H."/>
            <person name="Nantel A."/>
            <person name="Magee P.T."/>
        </authorList>
    </citation>
    <scope>GENOME REANNOTATION</scope>
    <source>
        <strain>SC5314 / ATCC MYA-2876</strain>
    </source>
</reference>
<reference key="3">
    <citation type="journal article" date="2013" name="Genome Biol.">
        <title>Assembly of a phased diploid Candida albicans genome facilitates allele-specific measurements and provides a simple model for repeat and indel structure.</title>
        <authorList>
            <person name="Muzzey D."/>
            <person name="Schwartz K."/>
            <person name="Weissman J.S."/>
            <person name="Sherlock G."/>
        </authorList>
    </citation>
    <scope>NUCLEOTIDE SEQUENCE [LARGE SCALE GENOMIC DNA]</scope>
    <scope>GENOME REANNOTATION</scope>
    <source>
        <strain>SC5314 / ATCC MYA-2876</strain>
    </source>
</reference>
<reference key="4">
    <citation type="journal article" date="2006" name="J. Biol. Chem.">
        <title>Cross-species and cross-compartmental aminoacylation of isoaccepting tRNAs by a class II tRNA synthetase.</title>
        <authorList>
            <person name="Huang H.Y."/>
            <person name="Kuei Y."/>
            <person name="Chao H.Y."/>
            <person name="Chen S.J."/>
            <person name="Yeh L.S."/>
            <person name="Wang C.C."/>
        </authorList>
    </citation>
    <scope>PROTEIN SEQUENCE OF N-TERMINUS</scope>
    <scope>FUNCTION</scope>
    <scope>ALTERNATIVE INITIATION</scope>
    <scope>SUBCELLULAR LOCATION</scope>
</reference>
<feature type="transit peptide" description="Mitochondrion" evidence="1 2">
    <location>
        <begin position="1"/>
        <end position="8"/>
    </location>
</feature>
<feature type="chain" id="PRO_0000402115" description="Alanine--tRNA ligase">
    <location>
        <begin position="9"/>
        <end position="969"/>
    </location>
</feature>
<feature type="binding site" evidence="1">
    <location>
        <position position="616"/>
    </location>
    <ligand>
        <name>Zn(2+)</name>
        <dbReference type="ChEBI" id="CHEBI:29105"/>
    </ligand>
</feature>
<feature type="binding site" evidence="1">
    <location>
        <position position="620"/>
    </location>
    <ligand>
        <name>Zn(2+)</name>
        <dbReference type="ChEBI" id="CHEBI:29105"/>
    </ligand>
</feature>
<feature type="binding site" evidence="1">
    <location>
        <position position="735"/>
    </location>
    <ligand>
        <name>Zn(2+)</name>
        <dbReference type="ChEBI" id="CHEBI:29105"/>
    </ligand>
</feature>
<feature type="binding site" evidence="1">
    <location>
        <position position="739"/>
    </location>
    <ligand>
        <name>Zn(2+)</name>
        <dbReference type="ChEBI" id="CHEBI:29105"/>
    </ligand>
</feature>
<feature type="splice variant" id="VSP_040237" description="In isoform Cytoplasmic." evidence="3">
    <location>
        <begin position="1"/>
        <end position="8"/>
    </location>
</feature>
<name>SYA_CANAL</name>
<gene>
    <name evidence="1" type="primary">ALA1</name>
    <name type="synonym">SYA1</name>
    <name type="ordered locus">CAALFM_C603720WA</name>
    <name type="ORF">CaO19.13169</name>
    <name type="ORF">CaO19.5746</name>
</gene>
<keyword id="KW-0024">Alternative initiation</keyword>
<keyword id="KW-0030">Aminoacyl-tRNA synthetase</keyword>
<keyword id="KW-0067">ATP-binding</keyword>
<keyword id="KW-0963">Cytoplasm</keyword>
<keyword id="KW-0903">Direct protein sequencing</keyword>
<keyword id="KW-0436">Ligase</keyword>
<keyword id="KW-0479">Metal-binding</keyword>
<keyword id="KW-0496">Mitochondrion</keyword>
<keyword id="KW-0547">Nucleotide-binding</keyword>
<keyword id="KW-0648">Protein biosynthesis</keyword>
<keyword id="KW-1185">Reference proteome</keyword>
<keyword id="KW-0694">RNA-binding</keyword>
<keyword id="KW-0809">Transit peptide</keyword>
<keyword id="KW-0820">tRNA-binding</keyword>
<keyword id="KW-0862">Zinc</keyword>
<sequence>MIKTLLRRMSSNTTIPTPNGSNHWTASKVRSTFLDYFKKQQHTYVPSSSVVPHNDPTLLFANAGMNQYKPIFLGTVDPASDFASLKRAANSQKCIRAGGKHNDLEDVGRDSYHHTFFEMLGNWSFGDYFKKEAIDYSWELLTKVYGLQEDRLYVTYFGGDEKQGLEPDLEAKNFWLKVGVPEDHILPGSVEDNFWEMGDQGPCGPCSEIHYDRIGGRNASALVNMDDPNVLEVWNVVFIQYNREADGNLRTLPNKHIDTGMGFERLVSILQNKYSNYDTDVFLPIFDKIREITGVRPYTGKFGNEDKDGIDTAYRVIADHVRTLTFAICDGGVPNNEGRGYVLRRILRRGSRYVRKYMNYPIGGFFQQLVDVVIEQNKEIFPEISSGAQDLKEILNEEELSFAKTLDRGEKLFEQYAIIASKTPEQTLSGKDVWRLYDTYGFPVDLTRLMAEEAGLKIDEEGFERAKEESREASKGSGTKDGKTLVKLDVHALSELDQNDAIPKTNDEFKYGLENVKAKVVGIYDGSKFVDSIEDPSIQYGILLDKTPFYAEQGGQEYDTGKLVIDGKSEFNVANVQVYAGYVLHTGNIVDGKLNVGDEIIATYDELRRWPIRNNHTGTHILNFALREVLGDGVDQKGSLVAPEKLRFDFSHKQAVTAKELEKIEAISNKYIKNNDKVYYKDVSLTKAKEINGLRAVFGETYPDPVRVVSIGVSVDDLLADPTNTKWHEISIEFCGGTHVAKTGDIKDLVIIEESGIAKGIRRIVAVTGHDAHHVQKVANEFEQEIDNASSLPFGVAKESKSKELGVALKKLSISVLDKQRLTEKFNKLDKSIKDNLKAKQKEETKKTLDVVNNWLNDKENASSFLVAHVPITANAKAITEAINLIKKQDKTKSIYLLTGETDKVAHGCYVSDEAIAKGINANELAKAVSENIGGKAGGKGNIVQGMGDKPQGINTAIEEVTKLFKEKL</sequence>
<accession>Q5A8K2</accession>
<accession>A0A1D8PQ88</accession>